<evidence type="ECO:0000250" key="1"/>
<evidence type="ECO:0000250" key="2">
    <source>
        <dbReference type="UniProtKB" id="P01225"/>
    </source>
</evidence>
<evidence type="ECO:0000305" key="3"/>
<accession>Q3HRV4</accession>
<feature type="signal peptide" evidence="1">
    <location>
        <begin position="1"/>
        <end position="20"/>
    </location>
</feature>
<feature type="chain" id="PRO_0000253466" description="Follitropin subunit beta">
    <location>
        <begin position="21"/>
        <end position="129"/>
    </location>
</feature>
<feature type="glycosylation site" description="N-linked (GlcNAc...) asparagine" evidence="2">
    <location>
        <position position="25"/>
    </location>
</feature>
<feature type="glycosylation site" description="N-linked (GlcNAc...) asparagine" evidence="2">
    <location>
        <position position="42"/>
    </location>
</feature>
<feature type="disulfide bond" evidence="2">
    <location>
        <begin position="21"/>
        <end position="69"/>
    </location>
</feature>
<feature type="disulfide bond" evidence="2">
    <location>
        <begin position="35"/>
        <end position="84"/>
    </location>
</feature>
<feature type="disulfide bond" evidence="2">
    <location>
        <begin position="38"/>
        <end position="122"/>
    </location>
</feature>
<feature type="disulfide bond" evidence="2">
    <location>
        <begin position="46"/>
        <end position="100"/>
    </location>
</feature>
<feature type="disulfide bond" evidence="2">
    <location>
        <begin position="50"/>
        <end position="102"/>
    </location>
</feature>
<feature type="disulfide bond" evidence="2">
    <location>
        <begin position="105"/>
        <end position="112"/>
    </location>
</feature>
<protein>
    <recommendedName>
        <fullName>Follitropin subunit beta</fullName>
    </recommendedName>
    <alternativeName>
        <fullName>Follicle-stimulating hormone beta subunit</fullName>
        <shortName>FSH-B</shortName>
        <shortName>FSH-beta</shortName>
    </alternativeName>
    <alternativeName>
        <fullName>Follitropin beta chain</fullName>
    </alternativeName>
</protein>
<keyword id="KW-1015">Disulfide bond</keyword>
<keyword id="KW-0325">Glycoprotein</keyword>
<keyword id="KW-0372">Hormone</keyword>
<keyword id="KW-1185">Reference proteome</keyword>
<keyword id="KW-0964">Secreted</keyword>
<keyword id="KW-0732">Signal</keyword>
<name>FSHB_AOTNA</name>
<comment type="function">
    <text evidence="2">Together with the alpha chain CGA constitutes follitropin, the follicle-stimulating hormone, and provides its biological specificity to the hormone heterodimer. Binds FSHR, a G protein-coupled receptor, on target cells to activate downstream signaling pathways. Follitropin is involved in follicle development and spermatogenesis in reproductive organs.</text>
</comment>
<comment type="subunit">
    <text evidence="2">Heterodimer. The active follitropin is a heterodimer composed of an alpha chain/CGA shared with other hormones and a unique beta chain/FSHB shown here.</text>
</comment>
<comment type="subcellular location">
    <subcellularLocation>
        <location evidence="2">Secreted</location>
    </subcellularLocation>
    <text evidence="2">Efficient secretion requires dimerization with CGA.</text>
</comment>
<comment type="similarity">
    <text evidence="3">Belongs to the glycoprotein hormones subunit beta family.</text>
</comment>
<proteinExistence type="evidence at transcript level"/>
<gene>
    <name type="primary">FSHB</name>
</gene>
<sequence>MKTVQFCFLFCCWKAICCNSCELTNITIAIENEECHFCISINTTWCAGYCYTRDLVYKDPATPNIQTTCTFKELVYETVRVPGCAHHADSFYTYPVATQCHCGKCDSDSTDCTMQGLGPDYCSFSEMKE</sequence>
<reference key="1">
    <citation type="journal article" date="2008" name="Gen. Comp. Endocrinol.">
        <title>Molecular cloning of pituitary glycoprotein alpha-subunit and follicle stimulating hormone and chorionic gonadotropin beta-subunits from New World squirrel monkey and owl monkey.</title>
        <authorList>
            <person name="Scammell J.G."/>
            <person name="Funkhouser J.D."/>
            <person name="Moyer F.S."/>
            <person name="Gibson S.V."/>
            <person name="Willis D.L."/>
        </authorList>
    </citation>
    <scope>NUCLEOTIDE SEQUENCE [MRNA]</scope>
</reference>
<dbReference type="EMBL" id="DQ200807">
    <property type="protein sequence ID" value="ABA54986.1"/>
    <property type="molecule type" value="mRNA"/>
</dbReference>
<dbReference type="RefSeq" id="NP_001295456.1">
    <property type="nucleotide sequence ID" value="NM_001308527.1"/>
</dbReference>
<dbReference type="RefSeq" id="XP_021520700.1">
    <property type="nucleotide sequence ID" value="XM_021665025.2"/>
</dbReference>
<dbReference type="RefSeq" id="XP_021520703.1">
    <property type="nucleotide sequence ID" value="XM_021665028.2"/>
</dbReference>
<dbReference type="SMR" id="Q3HRV4"/>
<dbReference type="STRING" id="37293.ENSANAP00000026772"/>
<dbReference type="GlyCosmos" id="Q3HRV4">
    <property type="glycosylation" value="2 sites, No reported glycans"/>
</dbReference>
<dbReference type="Ensembl" id="ENSANAT00000044721.1">
    <property type="protein sequence ID" value="ENSANAP00000026772.1"/>
    <property type="gene ID" value="ENSANAG00000031137.1"/>
</dbReference>
<dbReference type="GeneID" id="105717389"/>
<dbReference type="KEGG" id="anan:105717389"/>
<dbReference type="CTD" id="2488"/>
<dbReference type="GeneTree" id="ENSGT00940000160051"/>
<dbReference type="OMA" id="PVATGCH"/>
<dbReference type="OrthoDB" id="8453657at2759"/>
<dbReference type="Proteomes" id="UP000233020">
    <property type="component" value="Unplaced"/>
</dbReference>
<dbReference type="GO" id="GO:0005737">
    <property type="term" value="C:cytoplasm"/>
    <property type="evidence" value="ECO:0007669"/>
    <property type="project" value="Ensembl"/>
</dbReference>
<dbReference type="GO" id="GO:0005615">
    <property type="term" value="C:extracellular space"/>
    <property type="evidence" value="ECO:0000250"/>
    <property type="project" value="UniProtKB"/>
</dbReference>
<dbReference type="GO" id="GO:0016914">
    <property type="term" value="C:follicle-stimulating hormone complex"/>
    <property type="evidence" value="ECO:0000250"/>
    <property type="project" value="UniProtKB"/>
</dbReference>
<dbReference type="GO" id="GO:0016913">
    <property type="term" value="F:follicle-stimulating hormone activity"/>
    <property type="evidence" value="ECO:0000250"/>
    <property type="project" value="UniProtKB"/>
</dbReference>
<dbReference type="GO" id="GO:0042699">
    <property type="term" value="P:follicle-stimulating hormone signaling pathway"/>
    <property type="evidence" value="ECO:0007669"/>
    <property type="project" value="Ensembl"/>
</dbReference>
<dbReference type="GO" id="GO:0007186">
    <property type="term" value="P:G protein-coupled receptor signaling pathway"/>
    <property type="evidence" value="ECO:0000250"/>
    <property type="project" value="UniProtKB"/>
</dbReference>
<dbReference type="GO" id="GO:0045780">
    <property type="term" value="P:positive regulation of bone resorption"/>
    <property type="evidence" value="ECO:0007669"/>
    <property type="project" value="Ensembl"/>
</dbReference>
<dbReference type="GO" id="GO:0010628">
    <property type="term" value="P:positive regulation of gene expression"/>
    <property type="evidence" value="ECO:0007669"/>
    <property type="project" value="Ensembl"/>
</dbReference>
<dbReference type="GO" id="GO:0010893">
    <property type="term" value="P:positive regulation of steroid biosynthetic process"/>
    <property type="evidence" value="ECO:0007669"/>
    <property type="project" value="Ensembl"/>
</dbReference>
<dbReference type="GO" id="GO:0045670">
    <property type="term" value="P:regulation of osteoclast differentiation"/>
    <property type="evidence" value="ECO:0007669"/>
    <property type="project" value="Ensembl"/>
</dbReference>
<dbReference type="GO" id="GO:0010469">
    <property type="term" value="P:regulation of signaling receptor activity"/>
    <property type="evidence" value="ECO:0000250"/>
    <property type="project" value="UniProtKB"/>
</dbReference>
<dbReference type="GO" id="GO:0060011">
    <property type="term" value="P:Sertoli cell proliferation"/>
    <property type="evidence" value="ECO:0007669"/>
    <property type="project" value="Ensembl"/>
</dbReference>
<dbReference type="GO" id="GO:0007283">
    <property type="term" value="P:spermatogenesis"/>
    <property type="evidence" value="ECO:0007669"/>
    <property type="project" value="Ensembl"/>
</dbReference>
<dbReference type="GO" id="GO:0007179">
    <property type="term" value="P:transforming growth factor beta receptor signaling pathway"/>
    <property type="evidence" value="ECO:0007669"/>
    <property type="project" value="Ensembl"/>
</dbReference>
<dbReference type="CDD" id="cd00069">
    <property type="entry name" value="GHB_like"/>
    <property type="match status" value="1"/>
</dbReference>
<dbReference type="FunFam" id="2.10.90.10:FF:000007">
    <property type="entry name" value="Luteinizing hormone beta subunit"/>
    <property type="match status" value="1"/>
</dbReference>
<dbReference type="Gene3D" id="2.10.90.10">
    <property type="entry name" value="Cystine-knot cytokines"/>
    <property type="match status" value="1"/>
</dbReference>
<dbReference type="InterPro" id="IPR029034">
    <property type="entry name" value="Cystine-knot_cytokine"/>
</dbReference>
<dbReference type="InterPro" id="IPR006208">
    <property type="entry name" value="Glyco_hormone_CN"/>
</dbReference>
<dbReference type="InterPro" id="IPR001545">
    <property type="entry name" value="Gonadotropin_bsu"/>
</dbReference>
<dbReference type="InterPro" id="IPR018245">
    <property type="entry name" value="Gonadotropin_bsu_CS"/>
</dbReference>
<dbReference type="PANTHER" id="PTHR11515:SF17">
    <property type="entry name" value="FOLLITROPIN SUBUNIT BETA"/>
    <property type="match status" value="1"/>
</dbReference>
<dbReference type="PANTHER" id="PTHR11515">
    <property type="entry name" value="GLYCOPROTEIN HORMONE BETA CHAIN"/>
    <property type="match status" value="1"/>
</dbReference>
<dbReference type="Pfam" id="PF00007">
    <property type="entry name" value="Cys_knot"/>
    <property type="match status" value="1"/>
</dbReference>
<dbReference type="SMART" id="SM00068">
    <property type="entry name" value="GHB"/>
    <property type="match status" value="1"/>
</dbReference>
<dbReference type="SUPFAM" id="SSF57501">
    <property type="entry name" value="Cystine-knot cytokines"/>
    <property type="match status" value="1"/>
</dbReference>
<dbReference type="PROSITE" id="PS00261">
    <property type="entry name" value="GLYCO_HORMONE_BETA_1"/>
    <property type="match status" value="1"/>
</dbReference>
<dbReference type="PROSITE" id="PS00689">
    <property type="entry name" value="GLYCO_HORMONE_BETA_2"/>
    <property type="match status" value="1"/>
</dbReference>
<organism>
    <name type="scientific">Aotus nancymaae</name>
    <name type="common">Ma's night monkey</name>
    <dbReference type="NCBI Taxonomy" id="37293"/>
    <lineage>
        <taxon>Eukaryota</taxon>
        <taxon>Metazoa</taxon>
        <taxon>Chordata</taxon>
        <taxon>Craniata</taxon>
        <taxon>Vertebrata</taxon>
        <taxon>Euteleostomi</taxon>
        <taxon>Mammalia</taxon>
        <taxon>Eutheria</taxon>
        <taxon>Euarchontoglires</taxon>
        <taxon>Primates</taxon>
        <taxon>Haplorrhini</taxon>
        <taxon>Platyrrhini</taxon>
        <taxon>Aotidae</taxon>
        <taxon>Aotus</taxon>
    </lineage>
</organism>